<proteinExistence type="inferred from homology"/>
<feature type="chain" id="PRO_0000126321" description="Large ribosomal subunit protein bL36c">
    <location>
        <begin position="1"/>
        <end position="37"/>
    </location>
</feature>
<comment type="subcellular location">
    <subcellularLocation>
        <location>Plastid</location>
        <location>Chloroplast</location>
    </subcellularLocation>
</comment>
<comment type="similarity">
    <text evidence="1">Belongs to the bacterial ribosomal protein bL36 family.</text>
</comment>
<name>RK36_GRATL</name>
<geneLocation type="chloroplast"/>
<dbReference type="EMBL" id="AY673996">
    <property type="protein sequence ID" value="AAT79664.1"/>
    <property type="molecule type" value="Genomic_DNA"/>
</dbReference>
<dbReference type="RefSeq" id="YP_063589.1">
    <property type="nucleotide sequence ID" value="NC_006137.1"/>
</dbReference>
<dbReference type="SMR" id="Q6B8X1"/>
<dbReference type="GeneID" id="2944160"/>
<dbReference type="GO" id="GO:0009507">
    <property type="term" value="C:chloroplast"/>
    <property type="evidence" value="ECO:0007669"/>
    <property type="project" value="UniProtKB-SubCell"/>
</dbReference>
<dbReference type="GO" id="GO:1990904">
    <property type="term" value="C:ribonucleoprotein complex"/>
    <property type="evidence" value="ECO:0007669"/>
    <property type="project" value="UniProtKB-KW"/>
</dbReference>
<dbReference type="GO" id="GO:0005840">
    <property type="term" value="C:ribosome"/>
    <property type="evidence" value="ECO:0007669"/>
    <property type="project" value="UniProtKB-KW"/>
</dbReference>
<dbReference type="GO" id="GO:0003735">
    <property type="term" value="F:structural constituent of ribosome"/>
    <property type="evidence" value="ECO:0007669"/>
    <property type="project" value="InterPro"/>
</dbReference>
<dbReference type="GO" id="GO:0006412">
    <property type="term" value="P:translation"/>
    <property type="evidence" value="ECO:0007669"/>
    <property type="project" value="UniProtKB-UniRule"/>
</dbReference>
<dbReference type="HAMAP" id="MF_00251">
    <property type="entry name" value="Ribosomal_bL36"/>
    <property type="match status" value="1"/>
</dbReference>
<dbReference type="InterPro" id="IPR000473">
    <property type="entry name" value="Ribosomal_bL36"/>
</dbReference>
<dbReference type="InterPro" id="IPR035977">
    <property type="entry name" value="Ribosomal_bL36_sp"/>
</dbReference>
<dbReference type="NCBIfam" id="TIGR01022">
    <property type="entry name" value="rpmJ_bact"/>
    <property type="match status" value="1"/>
</dbReference>
<dbReference type="PANTHER" id="PTHR42888">
    <property type="entry name" value="50S RIBOSOMAL PROTEIN L36, CHLOROPLASTIC"/>
    <property type="match status" value="1"/>
</dbReference>
<dbReference type="PANTHER" id="PTHR42888:SF1">
    <property type="entry name" value="LARGE RIBOSOMAL SUBUNIT PROTEIN BL36C"/>
    <property type="match status" value="1"/>
</dbReference>
<dbReference type="Pfam" id="PF00444">
    <property type="entry name" value="Ribosomal_L36"/>
    <property type="match status" value="1"/>
</dbReference>
<dbReference type="SUPFAM" id="SSF57840">
    <property type="entry name" value="Ribosomal protein L36"/>
    <property type="match status" value="1"/>
</dbReference>
<dbReference type="PROSITE" id="PS00828">
    <property type="entry name" value="RIBOSOMAL_L36"/>
    <property type="match status" value="1"/>
</dbReference>
<organism>
    <name type="scientific">Gracilaria tenuistipitata var. liui</name>
    <name type="common">Red alga</name>
    <dbReference type="NCBI Taxonomy" id="285951"/>
    <lineage>
        <taxon>Eukaryota</taxon>
        <taxon>Rhodophyta</taxon>
        <taxon>Florideophyceae</taxon>
        <taxon>Rhodymeniophycidae</taxon>
        <taxon>Gracilariales</taxon>
        <taxon>Gracilariaceae</taxon>
        <taxon>Gracilaria</taxon>
        <taxon>Gracilaria tenuistipitata</taxon>
    </lineage>
</organism>
<accession>Q6B8X1</accession>
<reference key="1">
    <citation type="journal article" date="2004" name="J. Mol. Evol.">
        <title>Comparative analysis of the complete plastid genome sequence of the red alga Gracilaria tenuistipitata var. liui provides insights into the evolution of rhodoplasts and their relationship to other plastids.</title>
        <authorList>
            <person name="Hagopian J.C."/>
            <person name="Reis M."/>
            <person name="Kitajima J.P."/>
            <person name="Bhattacharya D."/>
            <person name="de Oliveira M.C."/>
        </authorList>
    </citation>
    <scope>NUCLEOTIDE SEQUENCE [LARGE SCALE GENOMIC DNA]</scope>
</reference>
<gene>
    <name evidence="1" type="primary">rpl36</name>
    <name type="ordered locus">Grc000083</name>
</gene>
<keyword id="KW-0150">Chloroplast</keyword>
<keyword id="KW-0934">Plastid</keyword>
<keyword id="KW-0687">Ribonucleoprotein</keyword>
<keyword id="KW-0689">Ribosomal protein</keyword>
<protein>
    <recommendedName>
        <fullName evidence="1">Large ribosomal subunit protein bL36c</fullName>
    </recommendedName>
    <alternativeName>
        <fullName evidence="2">50S ribosomal protein L36, chloroplastic</fullName>
    </alternativeName>
</protein>
<evidence type="ECO:0000255" key="1">
    <source>
        <dbReference type="HAMAP-Rule" id="MF_00251"/>
    </source>
</evidence>
<evidence type="ECO:0000305" key="2"/>
<sequence>MKVRASVKKICDKCRVIRRNRKIIIICNNAKHKQRQG</sequence>